<gene>
    <name evidence="1" type="primary">pdxB</name>
    <name type="ordered locus">SeD_A2721</name>
</gene>
<comment type="function">
    <text evidence="1">Catalyzes the oxidation of erythronate-4-phosphate to 3-hydroxy-2-oxo-4-phosphonooxybutanoate.</text>
</comment>
<comment type="catalytic activity">
    <reaction evidence="1">
        <text>4-phospho-D-erythronate + NAD(+) = (R)-3-hydroxy-2-oxo-4-phosphooxybutanoate + NADH + H(+)</text>
        <dbReference type="Rhea" id="RHEA:18829"/>
        <dbReference type="ChEBI" id="CHEBI:15378"/>
        <dbReference type="ChEBI" id="CHEBI:57540"/>
        <dbReference type="ChEBI" id="CHEBI:57945"/>
        <dbReference type="ChEBI" id="CHEBI:58538"/>
        <dbReference type="ChEBI" id="CHEBI:58766"/>
        <dbReference type="EC" id="1.1.1.290"/>
    </reaction>
</comment>
<comment type="pathway">
    <text evidence="1">Cofactor biosynthesis; pyridoxine 5'-phosphate biosynthesis; pyridoxine 5'-phosphate from D-erythrose 4-phosphate: step 2/5.</text>
</comment>
<comment type="subunit">
    <text evidence="1">Homodimer.</text>
</comment>
<comment type="subcellular location">
    <subcellularLocation>
        <location evidence="1">Cytoplasm</location>
    </subcellularLocation>
</comment>
<comment type="similarity">
    <text evidence="1">Belongs to the D-isomer specific 2-hydroxyacid dehydrogenase family. PdxB subfamily.</text>
</comment>
<organism>
    <name type="scientific">Salmonella dublin (strain CT_02021853)</name>
    <dbReference type="NCBI Taxonomy" id="439851"/>
    <lineage>
        <taxon>Bacteria</taxon>
        <taxon>Pseudomonadati</taxon>
        <taxon>Pseudomonadota</taxon>
        <taxon>Gammaproteobacteria</taxon>
        <taxon>Enterobacterales</taxon>
        <taxon>Enterobacteriaceae</taxon>
        <taxon>Salmonella</taxon>
    </lineage>
</organism>
<dbReference type="EC" id="1.1.1.290" evidence="1"/>
<dbReference type="EMBL" id="CP001144">
    <property type="protein sequence ID" value="ACH75935.1"/>
    <property type="molecule type" value="Genomic_DNA"/>
</dbReference>
<dbReference type="RefSeq" id="WP_000699176.1">
    <property type="nucleotide sequence ID" value="NC_011205.1"/>
</dbReference>
<dbReference type="SMR" id="B5FPL4"/>
<dbReference type="KEGG" id="sed:SeD_A2721"/>
<dbReference type="HOGENOM" id="CLU_019796_4_0_6"/>
<dbReference type="UniPathway" id="UPA00244">
    <property type="reaction ID" value="UER00310"/>
</dbReference>
<dbReference type="Proteomes" id="UP000008322">
    <property type="component" value="Chromosome"/>
</dbReference>
<dbReference type="GO" id="GO:0005829">
    <property type="term" value="C:cytosol"/>
    <property type="evidence" value="ECO:0007669"/>
    <property type="project" value="TreeGrafter"/>
</dbReference>
<dbReference type="GO" id="GO:0033711">
    <property type="term" value="F:4-phosphoerythronate dehydrogenase activity"/>
    <property type="evidence" value="ECO:0007669"/>
    <property type="project" value="UniProtKB-EC"/>
</dbReference>
<dbReference type="GO" id="GO:0051287">
    <property type="term" value="F:NAD binding"/>
    <property type="evidence" value="ECO:0007669"/>
    <property type="project" value="InterPro"/>
</dbReference>
<dbReference type="GO" id="GO:0046983">
    <property type="term" value="F:protein dimerization activity"/>
    <property type="evidence" value="ECO:0007669"/>
    <property type="project" value="InterPro"/>
</dbReference>
<dbReference type="GO" id="GO:0036001">
    <property type="term" value="P:'de novo' pyridoxal 5'-phosphate biosynthetic process"/>
    <property type="evidence" value="ECO:0007669"/>
    <property type="project" value="TreeGrafter"/>
</dbReference>
<dbReference type="GO" id="GO:0008615">
    <property type="term" value="P:pyridoxine biosynthetic process"/>
    <property type="evidence" value="ECO:0007669"/>
    <property type="project" value="UniProtKB-UniRule"/>
</dbReference>
<dbReference type="CDD" id="cd12158">
    <property type="entry name" value="ErythrP_dh"/>
    <property type="match status" value="1"/>
</dbReference>
<dbReference type="FunFam" id="3.30.1370.170:FF:000001">
    <property type="entry name" value="Erythronate-4-phosphate dehydrogenase"/>
    <property type="match status" value="1"/>
</dbReference>
<dbReference type="FunFam" id="3.40.50.720:FF:000093">
    <property type="entry name" value="Erythronate-4-phosphate dehydrogenase"/>
    <property type="match status" value="1"/>
</dbReference>
<dbReference type="Gene3D" id="3.30.1370.170">
    <property type="match status" value="1"/>
</dbReference>
<dbReference type="Gene3D" id="3.40.50.720">
    <property type="entry name" value="NAD(P)-binding Rossmann-like Domain"/>
    <property type="match status" value="2"/>
</dbReference>
<dbReference type="HAMAP" id="MF_01825">
    <property type="entry name" value="PdxB"/>
    <property type="match status" value="1"/>
</dbReference>
<dbReference type="InterPro" id="IPR006139">
    <property type="entry name" value="D-isomer_2_OHA_DH_cat_dom"/>
</dbReference>
<dbReference type="InterPro" id="IPR029753">
    <property type="entry name" value="D-isomer_DH_CS"/>
</dbReference>
<dbReference type="InterPro" id="IPR029752">
    <property type="entry name" value="D-isomer_DH_CS1"/>
</dbReference>
<dbReference type="InterPro" id="IPR006140">
    <property type="entry name" value="D-isomer_DH_NAD-bd"/>
</dbReference>
<dbReference type="InterPro" id="IPR020921">
    <property type="entry name" value="Erythronate-4-P_DHase"/>
</dbReference>
<dbReference type="InterPro" id="IPR024531">
    <property type="entry name" value="Erythronate-4-P_DHase_dimer"/>
</dbReference>
<dbReference type="InterPro" id="IPR036291">
    <property type="entry name" value="NAD(P)-bd_dom_sf"/>
</dbReference>
<dbReference type="InterPro" id="IPR038251">
    <property type="entry name" value="PdxB_dimer_sf"/>
</dbReference>
<dbReference type="NCBIfam" id="NF001309">
    <property type="entry name" value="PRK00257.1"/>
    <property type="match status" value="1"/>
</dbReference>
<dbReference type="NCBIfam" id="NF011966">
    <property type="entry name" value="PRK15438.1"/>
    <property type="match status" value="1"/>
</dbReference>
<dbReference type="PANTHER" id="PTHR42938">
    <property type="entry name" value="FORMATE DEHYDROGENASE 1"/>
    <property type="match status" value="1"/>
</dbReference>
<dbReference type="PANTHER" id="PTHR42938:SF9">
    <property type="entry name" value="FORMATE DEHYDROGENASE 1"/>
    <property type="match status" value="1"/>
</dbReference>
<dbReference type="Pfam" id="PF00389">
    <property type="entry name" value="2-Hacid_dh"/>
    <property type="match status" value="1"/>
</dbReference>
<dbReference type="Pfam" id="PF02826">
    <property type="entry name" value="2-Hacid_dh_C"/>
    <property type="match status" value="1"/>
</dbReference>
<dbReference type="Pfam" id="PF11890">
    <property type="entry name" value="DUF3410"/>
    <property type="match status" value="1"/>
</dbReference>
<dbReference type="SUPFAM" id="SSF52283">
    <property type="entry name" value="Formate/glycerate dehydrogenase catalytic domain-like"/>
    <property type="match status" value="1"/>
</dbReference>
<dbReference type="SUPFAM" id="SSF51735">
    <property type="entry name" value="NAD(P)-binding Rossmann-fold domains"/>
    <property type="match status" value="1"/>
</dbReference>
<dbReference type="PROSITE" id="PS00065">
    <property type="entry name" value="D_2_HYDROXYACID_DH_1"/>
    <property type="match status" value="1"/>
</dbReference>
<dbReference type="PROSITE" id="PS00671">
    <property type="entry name" value="D_2_HYDROXYACID_DH_3"/>
    <property type="match status" value="1"/>
</dbReference>
<evidence type="ECO:0000255" key="1">
    <source>
        <dbReference type="HAMAP-Rule" id="MF_01825"/>
    </source>
</evidence>
<keyword id="KW-0963">Cytoplasm</keyword>
<keyword id="KW-0520">NAD</keyword>
<keyword id="KW-0560">Oxidoreductase</keyword>
<keyword id="KW-0664">Pyridoxine biosynthesis</keyword>
<feature type="chain" id="PRO_1000188275" description="Erythronate-4-phosphate dehydrogenase">
    <location>
        <begin position="1"/>
        <end position="378"/>
    </location>
</feature>
<feature type="active site" evidence="1">
    <location>
        <position position="208"/>
    </location>
</feature>
<feature type="active site" evidence="1">
    <location>
        <position position="237"/>
    </location>
</feature>
<feature type="active site" description="Proton donor" evidence="1">
    <location>
        <position position="254"/>
    </location>
</feature>
<feature type="binding site" evidence="1">
    <location>
        <position position="45"/>
    </location>
    <ligand>
        <name>substrate</name>
    </ligand>
</feature>
<feature type="binding site" evidence="1">
    <location>
        <position position="66"/>
    </location>
    <ligand>
        <name>substrate</name>
    </ligand>
</feature>
<feature type="binding site" evidence="1">
    <location>
        <position position="146"/>
    </location>
    <ligand>
        <name>NAD(+)</name>
        <dbReference type="ChEBI" id="CHEBI:57540"/>
    </ligand>
</feature>
<feature type="binding site" evidence="1">
    <location>
        <position position="175"/>
    </location>
    <ligand>
        <name>NAD(+)</name>
        <dbReference type="ChEBI" id="CHEBI:57540"/>
    </ligand>
</feature>
<feature type="binding site" evidence="1">
    <location>
        <position position="232"/>
    </location>
    <ligand>
        <name>NAD(+)</name>
        <dbReference type="ChEBI" id="CHEBI:57540"/>
    </ligand>
</feature>
<feature type="binding site" evidence="1">
    <location>
        <position position="257"/>
    </location>
    <ligand>
        <name>NAD(+)</name>
        <dbReference type="ChEBI" id="CHEBI:57540"/>
    </ligand>
</feature>
<feature type="binding site" evidence="1">
    <location>
        <position position="258"/>
    </location>
    <ligand>
        <name>substrate</name>
    </ligand>
</feature>
<proteinExistence type="inferred from homology"/>
<protein>
    <recommendedName>
        <fullName evidence="1">Erythronate-4-phosphate dehydrogenase</fullName>
        <ecNumber evidence="1">1.1.1.290</ecNumber>
    </recommendedName>
</protein>
<accession>B5FPL4</accession>
<name>PDXB_SALDC</name>
<reference key="1">
    <citation type="journal article" date="2011" name="J. Bacteriol.">
        <title>Comparative genomics of 28 Salmonella enterica isolates: evidence for CRISPR-mediated adaptive sublineage evolution.</title>
        <authorList>
            <person name="Fricke W.F."/>
            <person name="Mammel M.K."/>
            <person name="McDermott P.F."/>
            <person name="Tartera C."/>
            <person name="White D.G."/>
            <person name="Leclerc J.E."/>
            <person name="Ravel J."/>
            <person name="Cebula T.A."/>
        </authorList>
    </citation>
    <scope>NUCLEOTIDE SEQUENCE [LARGE SCALE GENOMIC DNA]</scope>
    <source>
        <strain>CT_02021853</strain>
    </source>
</reference>
<sequence length="378" mass="41279">MKILVDENMPYARELFSRLGEVKAVPGRPIPVEELNHADALMVRSVTKVNESLLSGTPINFVGTATAGTDHVDEAWLKQAGIGFSAAPGCNAIAVVEYVFSALLMLAERDGFSLRDRTIGIVGVGNVGSRLQTRLEALGIRTLLCDPPRAARGDEGDFRTLDELVQEADVLTFHTPLYKDGPYKTLHLADETLIRRLKPGAILINACRGPVVDNAALLARLNAGQPLSVVLDVWEGEPDLNVALLEAVDIGTSHIAGYTLEGKARGTTQVFEAYSAFIGREQHVALETLLPAPEFGRITLHGPLDQPTLKRLAHLVYDVRRDDAPLRKVAGIPGEFDKLRKNYLERREWSSLYVMCDDETAAALLCKLGFNAVHHPAH</sequence>